<proteinExistence type="inferred from homology"/>
<reference key="1">
    <citation type="journal article" date="2003" name="Proc. Natl. Acad. Sci. U.S.A.">
        <title>The complete genome sequence of Mycobacterium bovis.</title>
        <authorList>
            <person name="Garnier T."/>
            <person name="Eiglmeier K."/>
            <person name="Camus J.-C."/>
            <person name="Medina N."/>
            <person name="Mansoor H."/>
            <person name="Pryor M."/>
            <person name="Duthoy S."/>
            <person name="Grondin S."/>
            <person name="Lacroix C."/>
            <person name="Monsempe C."/>
            <person name="Simon S."/>
            <person name="Harris B."/>
            <person name="Atkin R."/>
            <person name="Doggett J."/>
            <person name="Mayes R."/>
            <person name="Keating L."/>
            <person name="Wheeler P.R."/>
            <person name="Parkhill J."/>
            <person name="Barrell B.G."/>
            <person name="Cole S.T."/>
            <person name="Gordon S.V."/>
            <person name="Hewinson R.G."/>
        </authorList>
    </citation>
    <scope>NUCLEOTIDE SEQUENCE [LARGE SCALE GENOMIC DNA]</scope>
    <source>
        <strain>ATCC BAA-935 / AF2122/97</strain>
    </source>
</reference>
<reference key="2">
    <citation type="journal article" date="2017" name="Genome Announc.">
        <title>Updated reference genome sequence and annotation of Mycobacterium bovis AF2122/97.</title>
        <authorList>
            <person name="Malone K.M."/>
            <person name="Farrell D."/>
            <person name="Stuber T.P."/>
            <person name="Schubert O.T."/>
            <person name="Aebersold R."/>
            <person name="Robbe-Austerman S."/>
            <person name="Gordon S.V."/>
        </authorList>
    </citation>
    <scope>NUCLEOTIDE SEQUENCE [LARGE SCALE GENOMIC DNA]</scope>
    <scope>GENOME REANNOTATION</scope>
    <source>
        <strain>ATCC BAA-935 / AF2122/97</strain>
    </source>
</reference>
<keyword id="KW-0560">Oxidoreductase</keyword>
<keyword id="KW-1185">Reference proteome</keyword>
<comment type="similarity">
    <text evidence="4">Belongs to the short-chain dehydrogenases/reductases (SDR) family.</text>
</comment>
<protein>
    <recommendedName>
        <fullName>Probable oxidoreductase EphD</fullName>
        <ecNumber>1.-.-.-</ecNumber>
    </recommendedName>
</protein>
<gene>
    <name type="primary">ephD</name>
    <name type="ordered locus">BQ2027_MB2237C</name>
</gene>
<name>EPHD_MYCBO</name>
<feature type="chain" id="PRO_0000054855" description="Probable oxidoreductase EphD">
    <location>
        <begin position="1"/>
        <end position="592"/>
    </location>
</feature>
<feature type="domain" description="AB hydrolase-1" evidence="2">
    <location>
        <begin position="30"/>
        <end position="286"/>
    </location>
</feature>
<feature type="active site" description="Proton acceptor" evidence="3">
    <location>
        <position position="474"/>
    </location>
</feature>
<feature type="binding site" evidence="1">
    <location>
        <position position="461"/>
    </location>
    <ligand>
        <name>substrate</name>
    </ligand>
</feature>
<accession>P66778</accession>
<accession>A0A1R3Y1A5</accession>
<accession>Q10402</accession>
<accession>X2BKF0</accession>
<dbReference type="EC" id="1.-.-.-"/>
<dbReference type="EMBL" id="LT708304">
    <property type="protein sequence ID" value="SIU00845.1"/>
    <property type="molecule type" value="Genomic_DNA"/>
</dbReference>
<dbReference type="RefSeq" id="NP_855886.1">
    <property type="nucleotide sequence ID" value="NC_002945.3"/>
</dbReference>
<dbReference type="RefSeq" id="WP_003411445.1">
    <property type="nucleotide sequence ID" value="NC_002945.4"/>
</dbReference>
<dbReference type="SMR" id="P66778"/>
<dbReference type="ESTHER" id="myctu-ephd">
    <property type="family name" value="Epoxide_hydrolase"/>
</dbReference>
<dbReference type="KEGG" id="mbo:BQ2027_MB2237C"/>
<dbReference type="PATRIC" id="fig|233413.5.peg.2453"/>
<dbReference type="Proteomes" id="UP000001419">
    <property type="component" value="Chromosome"/>
</dbReference>
<dbReference type="GO" id="GO:0016491">
    <property type="term" value="F:oxidoreductase activity"/>
    <property type="evidence" value="ECO:0007669"/>
    <property type="project" value="UniProtKB-KW"/>
</dbReference>
<dbReference type="CDD" id="cd05233">
    <property type="entry name" value="SDR_c"/>
    <property type="match status" value="1"/>
</dbReference>
<dbReference type="FunFam" id="3.40.50.720:FF:000666">
    <property type="entry name" value="Probable oxidoreductase EphD"/>
    <property type="match status" value="1"/>
</dbReference>
<dbReference type="Gene3D" id="3.40.50.1820">
    <property type="entry name" value="alpha/beta hydrolase"/>
    <property type="match status" value="1"/>
</dbReference>
<dbReference type="Gene3D" id="3.40.50.720">
    <property type="entry name" value="NAD(P)-binding Rossmann-like Domain"/>
    <property type="match status" value="1"/>
</dbReference>
<dbReference type="InterPro" id="IPR000073">
    <property type="entry name" value="AB_hydrolase_1"/>
</dbReference>
<dbReference type="InterPro" id="IPR029058">
    <property type="entry name" value="AB_hydrolase_fold"/>
</dbReference>
<dbReference type="InterPro" id="IPR036291">
    <property type="entry name" value="NAD(P)-bd_dom_sf"/>
</dbReference>
<dbReference type="InterPro" id="IPR020904">
    <property type="entry name" value="Sc_DH/Rdtase_CS"/>
</dbReference>
<dbReference type="InterPro" id="IPR002347">
    <property type="entry name" value="SDR_fam"/>
</dbReference>
<dbReference type="NCBIfam" id="NF004514">
    <property type="entry name" value="PRK05855.1"/>
    <property type="match status" value="1"/>
</dbReference>
<dbReference type="PANTHER" id="PTHR43391:SF12">
    <property type="entry name" value="OXIDOREDUCTASE EPHD-RELATED"/>
    <property type="match status" value="1"/>
</dbReference>
<dbReference type="PANTHER" id="PTHR43391">
    <property type="entry name" value="RETINOL DEHYDROGENASE-RELATED"/>
    <property type="match status" value="1"/>
</dbReference>
<dbReference type="Pfam" id="PF00561">
    <property type="entry name" value="Abhydrolase_1"/>
    <property type="match status" value="1"/>
</dbReference>
<dbReference type="Pfam" id="PF00106">
    <property type="entry name" value="adh_short"/>
    <property type="match status" value="1"/>
</dbReference>
<dbReference type="PRINTS" id="PR00081">
    <property type="entry name" value="GDHRDH"/>
</dbReference>
<dbReference type="PRINTS" id="PR00080">
    <property type="entry name" value="SDRFAMILY"/>
</dbReference>
<dbReference type="SMART" id="SM00822">
    <property type="entry name" value="PKS_KR"/>
    <property type="match status" value="1"/>
</dbReference>
<dbReference type="SUPFAM" id="SSF53474">
    <property type="entry name" value="alpha/beta-Hydrolases"/>
    <property type="match status" value="1"/>
</dbReference>
<dbReference type="SUPFAM" id="SSF51735">
    <property type="entry name" value="NAD(P)-binding Rossmann-fold domains"/>
    <property type="match status" value="1"/>
</dbReference>
<dbReference type="PROSITE" id="PS00061">
    <property type="entry name" value="ADH_SHORT"/>
    <property type="match status" value="1"/>
</dbReference>
<sequence>MPATQQMSRLVDSPDGVRIAVYHEGNPDGPTVVLVHGFPDSHVLWDGVVPLLAERFRIVRYDNRGVGRSSVPKPISAYTMAHFADDFDAVIGELSPGEPVHVLAHDWGSVGVWEYLRRPGASDRVASFTSVSGPSQDHLVNYVYGGLRRPWRPRTFLRAISQTLRLSYMALFSVPVVAPLLLRVALSSAAVRRNMVGDIPVDQIHHSETLARDAAHSVKTYPANYFRSFSSSRRGRAIPIVDVPVQLIVNSQDPYVRPYGYDQTARWVPRLWRRDIKAGHFSPMSHPQVMAAAVHDFADLADGKQPSRALLRAQVGRPRGYFGDTLVSVTGAGSGIGRETALAFAREGAEIVISDIDEATVKDTAAEIAARGGIAYPYVLDVSDAEAVEAFAERVSAEHGVPDIVVNNAGIGQAGRFLDTPAEQFDRVLAVNLGGVVNGCRAFGQRLVERGTGGHIVNVSSMAAYAPLQSLSAYCTSKAATYMFSDCLRAELDAAGVGLTTICPGVIDTNIVATTGFHAPGTDEEKIDGRRGQIDKMFALRSYGPDKVADAIVSAVKKKKPIRPVAPEAYALYGISRVLPQALRSTARLRVI</sequence>
<organism>
    <name type="scientific">Mycobacterium bovis (strain ATCC BAA-935 / AF2122/97)</name>
    <dbReference type="NCBI Taxonomy" id="233413"/>
    <lineage>
        <taxon>Bacteria</taxon>
        <taxon>Bacillati</taxon>
        <taxon>Actinomycetota</taxon>
        <taxon>Actinomycetes</taxon>
        <taxon>Mycobacteriales</taxon>
        <taxon>Mycobacteriaceae</taxon>
        <taxon>Mycobacterium</taxon>
        <taxon>Mycobacterium tuberculosis complex</taxon>
    </lineage>
</organism>
<evidence type="ECO:0000250" key="1"/>
<evidence type="ECO:0000255" key="2"/>
<evidence type="ECO:0000255" key="3">
    <source>
        <dbReference type="PROSITE-ProRule" id="PRU10001"/>
    </source>
</evidence>
<evidence type="ECO:0000305" key="4"/>